<reference key="1">
    <citation type="journal article" date="2005" name="Nucleic Acids Res.">
        <title>Genome dynamics and diversity of Shigella species, the etiologic agents of bacillary dysentery.</title>
        <authorList>
            <person name="Yang F."/>
            <person name="Yang J."/>
            <person name="Zhang X."/>
            <person name="Chen L."/>
            <person name="Jiang Y."/>
            <person name="Yan Y."/>
            <person name="Tang X."/>
            <person name="Wang J."/>
            <person name="Xiong Z."/>
            <person name="Dong J."/>
            <person name="Xue Y."/>
            <person name="Zhu Y."/>
            <person name="Xu X."/>
            <person name="Sun L."/>
            <person name="Chen S."/>
            <person name="Nie H."/>
            <person name="Peng J."/>
            <person name="Xu J."/>
            <person name="Wang Y."/>
            <person name="Yuan Z."/>
            <person name="Wen Y."/>
            <person name="Yao Z."/>
            <person name="Shen Y."/>
            <person name="Qiang B."/>
            <person name="Hou Y."/>
            <person name="Yu J."/>
            <person name="Jin Q."/>
        </authorList>
    </citation>
    <scope>NUCLEOTIDE SEQUENCE [LARGE SCALE GENOMIC DNA]</scope>
    <source>
        <strain>Sd197</strain>
    </source>
</reference>
<sequence>MNITATVLLAFGMSMDAFAASIGKGATLHKPKFSEALRTGLIFGAVETLTPLIGWGMGMLASRFVLEWNHWIAFVLLIFLGGRMIIEGFRGADDEDEEPRRRHGFWLLVTTAIATSLDAMAVGVGLAFLQVNIIATALAIGCATLIMSTLGMMVGRFIGSIIGKKAEILGGLVLIGIGVQILWTHFHG</sequence>
<proteinExistence type="inferred from homology"/>
<protein>
    <recommendedName>
        <fullName evidence="1">Probable manganese efflux pump MntP</fullName>
    </recommendedName>
</protein>
<organism>
    <name type="scientific">Shigella dysenteriae serotype 1 (strain Sd197)</name>
    <dbReference type="NCBI Taxonomy" id="300267"/>
    <lineage>
        <taxon>Bacteria</taxon>
        <taxon>Pseudomonadati</taxon>
        <taxon>Pseudomonadota</taxon>
        <taxon>Gammaproteobacteria</taxon>
        <taxon>Enterobacterales</taxon>
        <taxon>Enterobacteriaceae</taxon>
        <taxon>Shigella</taxon>
    </lineage>
</organism>
<dbReference type="EMBL" id="CP000034">
    <property type="protein sequence ID" value="ABB62067.1"/>
    <property type="status" value="ALT_INIT"/>
    <property type="molecule type" value="Genomic_DNA"/>
</dbReference>
<dbReference type="RefSeq" id="WP_001296134.1">
    <property type="nucleotide sequence ID" value="NC_007606.1"/>
</dbReference>
<dbReference type="RefSeq" id="YP_403558.1">
    <property type="nucleotide sequence ID" value="NC_007606.1"/>
</dbReference>
<dbReference type="EnsemblBacteria" id="ABB62067">
    <property type="protein sequence ID" value="ABB62067"/>
    <property type="gene ID" value="SDY_1967"/>
</dbReference>
<dbReference type="GeneID" id="93776070"/>
<dbReference type="KEGG" id="sdy:SDY_1967"/>
<dbReference type="PATRIC" id="fig|300267.13.peg.2375"/>
<dbReference type="HOGENOM" id="CLU_096410_0_0_6"/>
<dbReference type="Proteomes" id="UP000002716">
    <property type="component" value="Chromosome"/>
</dbReference>
<dbReference type="GO" id="GO:0005886">
    <property type="term" value="C:plasma membrane"/>
    <property type="evidence" value="ECO:0007669"/>
    <property type="project" value="UniProtKB-SubCell"/>
</dbReference>
<dbReference type="GO" id="GO:0005384">
    <property type="term" value="F:manganese ion transmembrane transporter activity"/>
    <property type="evidence" value="ECO:0007669"/>
    <property type="project" value="UniProtKB-UniRule"/>
</dbReference>
<dbReference type="HAMAP" id="MF_01521">
    <property type="entry name" value="MntP_pump"/>
    <property type="match status" value="1"/>
</dbReference>
<dbReference type="InterPro" id="IPR003810">
    <property type="entry name" value="Mntp/YtaF"/>
</dbReference>
<dbReference type="InterPro" id="IPR022929">
    <property type="entry name" value="Put_MntP"/>
</dbReference>
<dbReference type="NCBIfam" id="NF008546">
    <property type="entry name" value="PRK11469.1"/>
    <property type="match status" value="1"/>
</dbReference>
<dbReference type="PANTHER" id="PTHR35529">
    <property type="entry name" value="MANGANESE EFFLUX PUMP MNTP-RELATED"/>
    <property type="match status" value="1"/>
</dbReference>
<dbReference type="PANTHER" id="PTHR35529:SF1">
    <property type="entry name" value="MANGANESE EFFLUX PUMP MNTP-RELATED"/>
    <property type="match status" value="1"/>
</dbReference>
<dbReference type="Pfam" id="PF02659">
    <property type="entry name" value="Mntp"/>
    <property type="match status" value="1"/>
</dbReference>
<gene>
    <name evidence="1" type="primary">mntP</name>
    <name type="synonym">yebN</name>
    <name type="ordered locus">SDY_1967</name>
</gene>
<name>MNTP_SHIDS</name>
<keyword id="KW-0997">Cell inner membrane</keyword>
<keyword id="KW-1003">Cell membrane</keyword>
<keyword id="KW-0406">Ion transport</keyword>
<keyword id="KW-0464">Manganese</keyword>
<keyword id="KW-0472">Membrane</keyword>
<keyword id="KW-1185">Reference proteome</keyword>
<keyword id="KW-0812">Transmembrane</keyword>
<keyword id="KW-1133">Transmembrane helix</keyword>
<keyword id="KW-0813">Transport</keyword>
<feature type="chain" id="PRO_0000292544" description="Probable manganese efflux pump MntP">
    <location>
        <begin position="1"/>
        <end position="188"/>
    </location>
</feature>
<feature type="transmembrane region" description="Helical" evidence="1">
    <location>
        <begin position="3"/>
        <end position="23"/>
    </location>
</feature>
<feature type="transmembrane region" description="Helical" evidence="1">
    <location>
        <begin position="66"/>
        <end position="86"/>
    </location>
</feature>
<feature type="transmembrane region" description="Helical" evidence="1">
    <location>
        <begin position="106"/>
        <end position="128"/>
    </location>
</feature>
<feature type="transmembrane region" description="Helical" evidence="1">
    <location>
        <begin position="143"/>
        <end position="163"/>
    </location>
</feature>
<feature type="transmembrane region" description="Helical" evidence="1">
    <location>
        <begin position="168"/>
        <end position="188"/>
    </location>
</feature>
<evidence type="ECO:0000255" key="1">
    <source>
        <dbReference type="HAMAP-Rule" id="MF_01521"/>
    </source>
</evidence>
<evidence type="ECO:0000305" key="2"/>
<comment type="function">
    <text evidence="1">Probably functions as a manganese efflux pump.</text>
</comment>
<comment type="subcellular location">
    <subcellularLocation>
        <location evidence="1">Cell inner membrane</location>
        <topology evidence="1">Multi-pass membrane protein</topology>
    </subcellularLocation>
</comment>
<comment type="similarity">
    <text evidence="1">Belongs to the MntP (TC 9.B.29) family.</text>
</comment>
<comment type="sequence caution" evidence="2">
    <conflict type="erroneous initiation">
        <sequence resource="EMBL-CDS" id="ABB62067"/>
    </conflict>
</comment>
<accession>Q32F38</accession>